<gene>
    <name evidence="4" type="primary">agl3</name>
    <name evidence="6" type="ordered locus">Saci_0423</name>
</gene>
<comment type="function">
    <text evidence="2 3">Catalyzes the biosynthesis of UDP-sulfoquinovose by the transfer of sulfite to UDP-glucose (PubMed:22059775, PubMed:25605538). Important for the assembly of the S-layer N-glycans (PubMed:22059775). The reaction probably occurs through an NAD(+)-dependent oxidation/dehydration/enolization/sulfite addition process (PubMed:25605538). In vitro, in the absence of sulfite, UDP-D-glucose is converted via UDP-4-keto-D-glucose to UDP-D-glucose-5,6-ene (PubMed:25605538).</text>
</comment>
<comment type="catalytic activity">
    <reaction evidence="2 3">
        <text>sulfite + UDP-alpha-D-glucose + H(+) = UDP-alpha-D-6-sulfoquinovose + H2O</text>
        <dbReference type="Rhea" id="RHEA:13197"/>
        <dbReference type="ChEBI" id="CHEBI:15377"/>
        <dbReference type="ChEBI" id="CHEBI:15378"/>
        <dbReference type="ChEBI" id="CHEBI:17359"/>
        <dbReference type="ChEBI" id="CHEBI:58885"/>
        <dbReference type="ChEBI" id="CHEBI:60009"/>
        <dbReference type="EC" id="3.13.1.1"/>
    </reaction>
</comment>
<comment type="cofactor">
    <cofactor evidence="3">
        <name>NAD(+)</name>
        <dbReference type="ChEBI" id="CHEBI:57540"/>
    </cofactor>
</comment>
<comment type="disruption phenotype">
    <text evidence="2">Deletion of the gene results in a significant change in the size of the S-layer SlaA and the flagellin FlaB glycoproteins. Mutant has a significantly lower growth rate at elevated salt concentrations.</text>
</comment>
<comment type="similarity">
    <text evidence="5">Belongs to the NAD(P)-dependent epimerase/dehydratase family.</text>
</comment>
<sequence>MRILVLGIDGHLGWPLALRLAKRGHEVIGIDNLSTRRFSEEVGSDSAFPLPQPQERVSEAKKHLGVDITFYVGDITNYGFFKDIVQRYKPDAIVHFAEQRSAPYSMIDMDHAVYTVINNEVSTLRVIQAVLEVDPTIHILKMGTMGEYGTPAFDIPESIYVEAIVNGKKDKIIVPRKAGSVYHWTKVHDTDFLLHFQELYGLTVTDIMQGPVYGTRTEEIVEETLRTRFDFDEVWGTVVNRYCVEAILGLPLTVYGKGGQTRGFISLEDSIQALTLLLENPPKQGEYRVANQFAEIYSVKKIAEFVKKAGEELGLNVEIGSYENPRVEAEEHYYNPERKVLPSLGFYPKKRLPEDVKIMIKDLLPYKTRLERFKHVILPKTKWRKPQYVKRVR</sequence>
<organism>
    <name type="scientific">Sulfolobus acidocaldarius (strain ATCC 33909 / DSM 639 / JCM 8929 / NBRC 15157 / NCIMB 11770)</name>
    <dbReference type="NCBI Taxonomy" id="330779"/>
    <lineage>
        <taxon>Archaea</taxon>
        <taxon>Thermoproteota</taxon>
        <taxon>Thermoprotei</taxon>
        <taxon>Sulfolobales</taxon>
        <taxon>Sulfolobaceae</taxon>
        <taxon>Sulfolobus</taxon>
    </lineage>
</organism>
<reference key="1">
    <citation type="journal article" date="2005" name="J. Bacteriol.">
        <title>The genome of Sulfolobus acidocaldarius, a model organism of the Crenarchaeota.</title>
        <authorList>
            <person name="Chen L."/>
            <person name="Bruegger K."/>
            <person name="Skovgaard M."/>
            <person name="Redder P."/>
            <person name="She Q."/>
            <person name="Torarinsson E."/>
            <person name="Greve B."/>
            <person name="Awayez M."/>
            <person name="Zibat A."/>
            <person name="Klenk H.-P."/>
            <person name="Garrett R.A."/>
        </authorList>
    </citation>
    <scope>NUCLEOTIDE SEQUENCE [LARGE SCALE GENOMIC DNA]</scope>
    <source>
        <strain>ATCC 33909 / DSM 639 / JCM 8929 / NBRC 15157 / NCIMB 11770</strain>
    </source>
</reference>
<reference key="2">
    <citation type="journal article" date="2011" name="Mol. Microbiol.">
        <title>Sulfoquinovose synthase - an important enzyme in the N-glycosylation pathway of Sulfolobus acidocaldarius.</title>
        <authorList>
            <person name="Meyer B.H."/>
            <person name="Zolghadr B."/>
            <person name="Peyfoon E."/>
            <person name="Pabst M."/>
            <person name="Panico M."/>
            <person name="Morris H.R."/>
            <person name="Haslam S.M."/>
            <person name="Messner P."/>
            <person name="Schaeffer C."/>
            <person name="Dell A."/>
            <person name="Albers S.V."/>
        </authorList>
    </citation>
    <scope>FUNCTION</scope>
    <scope>CATALYTIC ACTIVITY</scope>
    <scope>DISRUPTION PHENOTYPE</scope>
    <source>
        <strain>MW001</strain>
    </source>
</reference>
<reference key="3">
    <citation type="journal article" date="2015" name="Extremophiles">
        <title>UDP-sulfoquinovose formation by Sulfolobus acidocaldarius.</title>
        <authorList>
            <person name="Zolghadr B."/>
            <person name="Gasselhuber B."/>
            <person name="Windwarder M."/>
            <person name="Pabst M."/>
            <person name="Kracher D."/>
            <person name="Kerndl M."/>
            <person name="Zayni S."/>
            <person name="Hofinger-Horvath A."/>
            <person name="Ludwig R."/>
            <person name="Haltrich D."/>
            <person name="Oostenbrink C."/>
            <person name="Obinger C."/>
            <person name="Kosma P."/>
            <person name="Messner P."/>
            <person name="Schaeffer C."/>
        </authorList>
    </citation>
    <scope>FUNCTION</scope>
    <scope>CATALYTIC ACTIVITY</scope>
    <scope>COFACTOR</scope>
    <scope>MUTAGENESIS OF HIS-95; ARG-100; THR-144; MET-145; GLU-147; TYR-148; SER-180; TYR-182; THR-185 AND LYS-186</scope>
</reference>
<keyword id="KW-0378">Hydrolase</keyword>
<keyword id="KW-0520">NAD</keyword>
<keyword id="KW-1185">Reference proteome</keyword>
<protein>
    <recommendedName>
        <fullName evidence="4">UDP-sulfoquinovose synthase</fullName>
        <ecNumber evidence="2 3">3.13.1.1</ecNumber>
    </recommendedName>
</protein>
<evidence type="ECO:0000250" key="1">
    <source>
        <dbReference type="UniProtKB" id="O48917"/>
    </source>
</evidence>
<evidence type="ECO:0000269" key="2">
    <source>
    </source>
</evidence>
<evidence type="ECO:0000269" key="3">
    <source>
    </source>
</evidence>
<evidence type="ECO:0000303" key="4">
    <source>
    </source>
</evidence>
<evidence type="ECO:0000305" key="5"/>
<evidence type="ECO:0000312" key="6">
    <source>
        <dbReference type="EMBL" id="AAY79836.1"/>
    </source>
</evidence>
<feature type="chain" id="PRO_0000444048" description="UDP-sulfoquinovose synthase">
    <location>
        <begin position="1"/>
        <end position="393"/>
    </location>
</feature>
<feature type="active site" evidence="1">
    <location>
        <position position="144"/>
    </location>
</feature>
<feature type="active site" description="Proton acceptor" evidence="1">
    <location>
        <position position="182"/>
    </location>
</feature>
<feature type="active site" evidence="1">
    <location>
        <position position="186"/>
    </location>
</feature>
<feature type="binding site" evidence="1">
    <location>
        <begin position="31"/>
        <end position="35"/>
    </location>
    <ligand>
        <name>NAD(+)</name>
        <dbReference type="ChEBI" id="CHEBI:57540"/>
    </ligand>
</feature>
<feature type="binding site" evidence="1">
    <location>
        <begin position="74"/>
        <end position="75"/>
    </location>
    <ligand>
        <name>NAD(+)</name>
        <dbReference type="ChEBI" id="CHEBI:57540"/>
    </ligand>
</feature>
<feature type="binding site" evidence="1">
    <location>
        <position position="100"/>
    </location>
    <ligand>
        <name>NAD(+)</name>
        <dbReference type="ChEBI" id="CHEBI:57540"/>
    </ligand>
</feature>
<feature type="binding site" evidence="1">
    <location>
        <position position="100"/>
    </location>
    <ligand>
        <name>substrate</name>
    </ligand>
</feature>
<feature type="binding site" evidence="1">
    <location>
        <position position="118"/>
    </location>
    <ligand>
        <name>NAD(+)</name>
        <dbReference type="ChEBI" id="CHEBI:57540"/>
    </ligand>
</feature>
<feature type="binding site" evidence="1">
    <location>
        <position position="144"/>
    </location>
    <ligand>
        <name>substrate</name>
    </ligand>
</feature>
<feature type="binding site" evidence="1">
    <location>
        <position position="182"/>
    </location>
    <ligand>
        <name>NAD(+)</name>
        <dbReference type="ChEBI" id="CHEBI:57540"/>
    </ligand>
</feature>
<feature type="binding site" evidence="1">
    <location>
        <position position="182"/>
    </location>
    <ligand>
        <name>substrate</name>
    </ligand>
</feature>
<feature type="binding site" evidence="1">
    <location>
        <position position="186"/>
    </location>
    <ligand>
        <name>NAD(+)</name>
        <dbReference type="ChEBI" id="CHEBI:57540"/>
    </ligand>
</feature>
<feature type="binding site" evidence="1">
    <location>
        <position position="209"/>
    </location>
    <ligand>
        <name>substrate</name>
    </ligand>
</feature>
<feature type="binding site" evidence="1">
    <location>
        <position position="212"/>
    </location>
    <ligand>
        <name>NAD(+)</name>
        <dbReference type="ChEBI" id="CHEBI:57540"/>
    </ligand>
</feature>
<feature type="binding site" evidence="1">
    <location>
        <begin position="238"/>
        <end position="241"/>
    </location>
    <ligand>
        <name>substrate</name>
    </ligand>
</feature>
<feature type="binding site" evidence="1">
    <location>
        <begin position="253"/>
        <end position="255"/>
    </location>
    <ligand>
        <name>substrate</name>
    </ligand>
</feature>
<feature type="binding site" evidence="1">
    <location>
        <begin position="326"/>
        <end position="328"/>
    </location>
    <ligand>
        <name>substrate</name>
    </ligand>
</feature>
<feature type="mutagenesis site" description="Loss of activity." evidence="3">
    <original>H</original>
    <variation>A</variation>
    <location>
        <position position="95"/>
    </location>
</feature>
<feature type="mutagenesis site" description="Loss of activity." evidence="3">
    <original>R</original>
    <variation>A</variation>
    <location>
        <position position="100"/>
    </location>
</feature>
<feature type="mutagenesis site" description="No change in activity." evidence="3">
    <original>T</original>
    <variation>A</variation>
    <location>
        <position position="144"/>
    </location>
</feature>
<feature type="mutagenesis site" description="Loss of activity." evidence="3">
    <original>M</original>
    <variation>A</variation>
    <location>
        <position position="145"/>
    </location>
</feature>
<feature type="mutagenesis site" description="Strong decrease in activity." evidence="3">
    <original>E</original>
    <variation>A</variation>
    <location>
        <position position="147"/>
    </location>
</feature>
<feature type="mutagenesis site" description="Strong decrease in activity." evidence="3">
    <original>Y</original>
    <variation>A</variation>
    <location>
        <position position="148"/>
    </location>
</feature>
<feature type="mutagenesis site" description="Decrease in activity." evidence="3">
    <original>S</original>
    <variation>A</variation>
    <location>
        <position position="180"/>
    </location>
</feature>
<feature type="mutagenesis site" description="Loss of activity." evidence="3">
    <original>Y</original>
    <variation>A</variation>
    <location>
        <position position="182"/>
    </location>
</feature>
<feature type="mutagenesis site" description="Decrease in activity." evidence="3">
    <original>T</original>
    <variation>A</variation>
    <location>
        <position position="185"/>
    </location>
</feature>
<feature type="mutagenesis site" description="Loss of activity." evidence="3">
    <original>K</original>
    <variation>A</variation>
    <location>
        <position position="186"/>
    </location>
</feature>
<dbReference type="EC" id="3.13.1.1" evidence="2 3"/>
<dbReference type="EMBL" id="CP000077">
    <property type="protein sequence ID" value="AAY79836.1"/>
    <property type="molecule type" value="Genomic_DNA"/>
</dbReference>
<dbReference type="RefSeq" id="WP_011277338.1">
    <property type="nucleotide sequence ID" value="NC_007181.1"/>
</dbReference>
<dbReference type="SMR" id="Q4JBJ3"/>
<dbReference type="STRING" id="330779.Saci_0423"/>
<dbReference type="GeneID" id="14550951"/>
<dbReference type="GeneID" id="78440772"/>
<dbReference type="KEGG" id="sai:Saci_0423"/>
<dbReference type="PATRIC" id="fig|330779.12.peg.421"/>
<dbReference type="eggNOG" id="arCOG04762">
    <property type="taxonomic scope" value="Archaea"/>
</dbReference>
<dbReference type="HOGENOM" id="CLU_040971_1_0_2"/>
<dbReference type="BRENDA" id="3.13.1.1">
    <property type="organism ID" value="6160"/>
</dbReference>
<dbReference type="Proteomes" id="UP000001018">
    <property type="component" value="Chromosome"/>
</dbReference>
<dbReference type="GO" id="GO:0046507">
    <property type="term" value="F:UDPsulfoquinovose synthase activity"/>
    <property type="evidence" value="ECO:0007669"/>
    <property type="project" value="UniProtKB-EC"/>
</dbReference>
<dbReference type="Gene3D" id="3.40.50.720">
    <property type="entry name" value="NAD(P)-binding Rossmann-like Domain"/>
    <property type="match status" value="1"/>
</dbReference>
<dbReference type="Gene3D" id="3.90.25.10">
    <property type="entry name" value="UDP-galactose 4-epimerase, domain 1"/>
    <property type="match status" value="1"/>
</dbReference>
<dbReference type="InterPro" id="IPR001509">
    <property type="entry name" value="Epimerase_deHydtase"/>
</dbReference>
<dbReference type="InterPro" id="IPR036291">
    <property type="entry name" value="NAD(P)-bd_dom_sf"/>
</dbReference>
<dbReference type="InterPro" id="IPR053578">
    <property type="entry name" value="UDP-sulfoquinovose_synthase"/>
</dbReference>
<dbReference type="NCBIfam" id="NF041015">
    <property type="entry name" value="UDPsulfquin_syn"/>
    <property type="match status" value="1"/>
</dbReference>
<dbReference type="PANTHER" id="PTHR43000">
    <property type="entry name" value="DTDP-D-GLUCOSE 4,6-DEHYDRATASE-RELATED"/>
    <property type="match status" value="1"/>
</dbReference>
<dbReference type="Pfam" id="PF01370">
    <property type="entry name" value="Epimerase"/>
    <property type="match status" value="1"/>
</dbReference>
<dbReference type="SUPFAM" id="SSF51735">
    <property type="entry name" value="NAD(P)-binding Rossmann-fold domains"/>
    <property type="match status" value="1"/>
</dbReference>
<name>AGL3_SULAC</name>
<accession>Q4JBJ3</accession>
<proteinExistence type="evidence at protein level"/>